<comment type="function">
    <text evidence="1">Catalyzes the NADPH-dependent reduction of glutamyl-tRNA(Glu) to glutamate 1-semialdehyde (GSA).</text>
</comment>
<comment type="catalytic activity">
    <reaction evidence="1">
        <text>(S)-4-amino-5-oxopentanoate + tRNA(Glu) + NADP(+) = L-glutamyl-tRNA(Glu) + NADPH + H(+)</text>
        <dbReference type="Rhea" id="RHEA:12344"/>
        <dbReference type="Rhea" id="RHEA-COMP:9663"/>
        <dbReference type="Rhea" id="RHEA-COMP:9680"/>
        <dbReference type="ChEBI" id="CHEBI:15378"/>
        <dbReference type="ChEBI" id="CHEBI:57501"/>
        <dbReference type="ChEBI" id="CHEBI:57783"/>
        <dbReference type="ChEBI" id="CHEBI:58349"/>
        <dbReference type="ChEBI" id="CHEBI:78442"/>
        <dbReference type="ChEBI" id="CHEBI:78520"/>
        <dbReference type="EC" id="1.2.1.70"/>
    </reaction>
</comment>
<comment type="pathway">
    <text evidence="1">Porphyrin-containing compound metabolism; protoporphyrin-IX biosynthesis; 5-aminolevulinate from L-glutamyl-tRNA(Glu): step 1/2.</text>
</comment>
<comment type="subunit">
    <text evidence="1">Homodimer.</text>
</comment>
<comment type="domain">
    <text evidence="1">Possesses an unusual extended V-shaped dimeric structure with each monomer consisting of three distinct domains arranged along a curved 'spinal' alpha-helix. The N-terminal catalytic domain specifically recognizes the glutamate moiety of the substrate. The second domain is the NADPH-binding domain, and the third C-terminal domain is responsible for dimerization.</text>
</comment>
<comment type="miscellaneous">
    <text evidence="1">During catalysis, the active site Cys acts as a nucleophile attacking the alpha-carbonyl group of tRNA-bound glutamate with the formation of a thioester intermediate between enzyme and glutamate, and the concomitant release of tRNA(Glu). The thioester intermediate is finally reduced by direct hydride transfer from NADPH, to form the product GSA.</text>
</comment>
<comment type="similarity">
    <text evidence="1">Belongs to the glutamyl-tRNA reductase family.</text>
</comment>
<comment type="sequence caution" evidence="2">
    <conflict type="erroneous initiation">
        <sequence resource="EMBL-CDS" id="ABG04926"/>
    </conflict>
</comment>
<name>HEM1_RUBXD</name>
<proteinExistence type="inferred from homology"/>
<accession>Q1AUK2</accession>
<keyword id="KW-0521">NADP</keyword>
<keyword id="KW-0560">Oxidoreductase</keyword>
<keyword id="KW-0627">Porphyrin biosynthesis</keyword>
<keyword id="KW-1185">Reference proteome</keyword>
<gene>
    <name evidence="1" type="primary">hemA</name>
    <name type="ordered locus">Rxyl_1979</name>
</gene>
<sequence length="429" mass="47130">MLIAVAGMSHRSAPVEARERVAFAPCAARSFLRRLREEDGVPEAVLLSTCNRTELYVVAEAEPARDRLLGLLAEDRGVEPGSLYRDTYWHTDAEAVRHLYRVSASLDSMVVGEAQILGQVRDAYRMATEERCTGPVLNRLFHTALRVGKRVRAETGIGDSSLSVPHVAAKLAGEVFGSLEGRRALVLGAGEMSELLVRHLRDRGVAEIRIANRTRERAERLAALFGGRAADLGDLPRELARADIVVSSTGSGEWVIRGPEVAAALESREEPLFLIDIAVPRDVDPVVQSIEGAFLYDIDDLQAVVERNAEDRQEAAAAAEEMIGPAVVEFMSWLSTLHVAPLIKELRDGAERIRRHEVSRALRKMDLSPEQEEAVERMSRSIVNKLLHGPISEIKARAGAGDPLDSAEVRRRLLSLRGPGVELHPSREP</sequence>
<evidence type="ECO:0000255" key="1">
    <source>
        <dbReference type="HAMAP-Rule" id="MF_00087"/>
    </source>
</evidence>
<evidence type="ECO:0000305" key="2"/>
<organism>
    <name type="scientific">Rubrobacter xylanophilus (strain DSM 9941 / JCM 11954 / NBRC 16129 / PRD-1)</name>
    <dbReference type="NCBI Taxonomy" id="266117"/>
    <lineage>
        <taxon>Bacteria</taxon>
        <taxon>Bacillati</taxon>
        <taxon>Actinomycetota</taxon>
        <taxon>Rubrobacteria</taxon>
        <taxon>Rubrobacterales</taxon>
        <taxon>Rubrobacteraceae</taxon>
        <taxon>Rubrobacter</taxon>
    </lineage>
</organism>
<reference key="1">
    <citation type="submission" date="2006-06" db="EMBL/GenBank/DDBJ databases">
        <title>Complete sequence of Rubrobacter xylanophilus DSM 9941.</title>
        <authorList>
            <consortium name="US DOE Joint Genome Institute"/>
            <person name="Copeland A."/>
            <person name="Lucas S."/>
            <person name="Lapidus A."/>
            <person name="Barry K."/>
            <person name="Detter J.C."/>
            <person name="Glavina del Rio T."/>
            <person name="Hammon N."/>
            <person name="Israni S."/>
            <person name="Dalin E."/>
            <person name="Tice H."/>
            <person name="Pitluck S."/>
            <person name="Munk A.C."/>
            <person name="Brettin T."/>
            <person name="Bruce D."/>
            <person name="Han C."/>
            <person name="Tapia R."/>
            <person name="Gilna P."/>
            <person name="Schmutz J."/>
            <person name="Larimer F."/>
            <person name="Land M."/>
            <person name="Hauser L."/>
            <person name="Kyrpides N."/>
            <person name="Lykidis A."/>
            <person name="da Costa M.S."/>
            <person name="Rainey F.A."/>
            <person name="Empadinhas N."/>
            <person name="Jolivet E."/>
            <person name="Battista J.R."/>
            <person name="Richardson P."/>
        </authorList>
    </citation>
    <scope>NUCLEOTIDE SEQUENCE [LARGE SCALE GENOMIC DNA]</scope>
    <source>
        <strain>DSM 9941 / JCM 11954 / NBRC 16129 / PRD-1</strain>
    </source>
</reference>
<feature type="chain" id="PRO_0000335068" description="Glutamyl-tRNA reductase">
    <location>
        <begin position="1"/>
        <end position="429"/>
    </location>
</feature>
<feature type="active site" description="Nucleophile" evidence="1">
    <location>
        <position position="50"/>
    </location>
</feature>
<feature type="binding site" evidence="1">
    <location>
        <begin position="49"/>
        <end position="52"/>
    </location>
    <ligand>
        <name>substrate</name>
    </ligand>
</feature>
<feature type="binding site" evidence="1">
    <location>
        <position position="108"/>
    </location>
    <ligand>
        <name>substrate</name>
    </ligand>
</feature>
<feature type="binding site" evidence="1">
    <location>
        <begin position="113"/>
        <end position="115"/>
    </location>
    <ligand>
        <name>substrate</name>
    </ligand>
</feature>
<feature type="binding site" evidence="1">
    <location>
        <position position="119"/>
    </location>
    <ligand>
        <name>substrate</name>
    </ligand>
</feature>
<feature type="binding site" evidence="1">
    <location>
        <begin position="188"/>
        <end position="193"/>
    </location>
    <ligand>
        <name>NADP(+)</name>
        <dbReference type="ChEBI" id="CHEBI:58349"/>
    </ligand>
</feature>
<feature type="site" description="Important for activity" evidence="1">
    <location>
        <position position="98"/>
    </location>
</feature>
<protein>
    <recommendedName>
        <fullName evidence="1">Glutamyl-tRNA reductase</fullName>
        <shortName evidence="1">GluTR</shortName>
        <ecNumber evidence="1">1.2.1.70</ecNumber>
    </recommendedName>
</protein>
<dbReference type="EC" id="1.2.1.70" evidence="1"/>
<dbReference type="EMBL" id="CP000386">
    <property type="protein sequence ID" value="ABG04926.1"/>
    <property type="status" value="ALT_INIT"/>
    <property type="molecule type" value="Genomic_DNA"/>
</dbReference>
<dbReference type="RefSeq" id="WP_156787697.1">
    <property type="nucleotide sequence ID" value="NC_008148.1"/>
</dbReference>
<dbReference type="SMR" id="Q1AUK2"/>
<dbReference type="STRING" id="266117.Rxyl_1979"/>
<dbReference type="KEGG" id="rxy:Rxyl_1979"/>
<dbReference type="eggNOG" id="COG0373">
    <property type="taxonomic scope" value="Bacteria"/>
</dbReference>
<dbReference type="HOGENOM" id="CLU_035113_2_2_11"/>
<dbReference type="OrthoDB" id="110209at2"/>
<dbReference type="UniPathway" id="UPA00251">
    <property type="reaction ID" value="UER00316"/>
</dbReference>
<dbReference type="Proteomes" id="UP000006637">
    <property type="component" value="Chromosome"/>
</dbReference>
<dbReference type="GO" id="GO:0008883">
    <property type="term" value="F:glutamyl-tRNA reductase activity"/>
    <property type="evidence" value="ECO:0007669"/>
    <property type="project" value="UniProtKB-UniRule"/>
</dbReference>
<dbReference type="GO" id="GO:0050661">
    <property type="term" value="F:NADP binding"/>
    <property type="evidence" value="ECO:0007669"/>
    <property type="project" value="InterPro"/>
</dbReference>
<dbReference type="GO" id="GO:0019353">
    <property type="term" value="P:protoporphyrinogen IX biosynthetic process from glutamate"/>
    <property type="evidence" value="ECO:0007669"/>
    <property type="project" value="TreeGrafter"/>
</dbReference>
<dbReference type="CDD" id="cd05213">
    <property type="entry name" value="NAD_bind_Glutamyl_tRNA_reduct"/>
    <property type="match status" value="1"/>
</dbReference>
<dbReference type="FunFam" id="3.30.460.30:FF:000001">
    <property type="entry name" value="Glutamyl-tRNA reductase"/>
    <property type="match status" value="1"/>
</dbReference>
<dbReference type="FunFam" id="3.40.50.720:FF:000031">
    <property type="entry name" value="Glutamyl-tRNA reductase"/>
    <property type="match status" value="1"/>
</dbReference>
<dbReference type="Gene3D" id="3.30.460.30">
    <property type="entry name" value="Glutamyl-tRNA reductase, N-terminal domain"/>
    <property type="match status" value="1"/>
</dbReference>
<dbReference type="Gene3D" id="3.40.50.720">
    <property type="entry name" value="NAD(P)-binding Rossmann-like Domain"/>
    <property type="match status" value="1"/>
</dbReference>
<dbReference type="HAMAP" id="MF_00087">
    <property type="entry name" value="Glu_tRNA_reductase"/>
    <property type="match status" value="1"/>
</dbReference>
<dbReference type="InterPro" id="IPR000343">
    <property type="entry name" value="4pyrrol_synth_GluRdtase"/>
</dbReference>
<dbReference type="InterPro" id="IPR015896">
    <property type="entry name" value="4pyrrol_synth_GluRdtase_dimer"/>
</dbReference>
<dbReference type="InterPro" id="IPR015895">
    <property type="entry name" value="4pyrrol_synth_GluRdtase_N"/>
</dbReference>
<dbReference type="InterPro" id="IPR018214">
    <property type="entry name" value="GluRdtase_CS"/>
</dbReference>
<dbReference type="InterPro" id="IPR036453">
    <property type="entry name" value="GluRdtase_dimer_dom_sf"/>
</dbReference>
<dbReference type="InterPro" id="IPR036343">
    <property type="entry name" value="GluRdtase_N_sf"/>
</dbReference>
<dbReference type="InterPro" id="IPR036291">
    <property type="entry name" value="NAD(P)-bd_dom_sf"/>
</dbReference>
<dbReference type="InterPro" id="IPR006151">
    <property type="entry name" value="Shikm_DH/Glu-tRNA_Rdtase"/>
</dbReference>
<dbReference type="NCBIfam" id="TIGR01035">
    <property type="entry name" value="hemA"/>
    <property type="match status" value="1"/>
</dbReference>
<dbReference type="PANTHER" id="PTHR43013">
    <property type="entry name" value="GLUTAMYL-TRNA REDUCTASE"/>
    <property type="match status" value="1"/>
</dbReference>
<dbReference type="PANTHER" id="PTHR43013:SF1">
    <property type="entry name" value="GLUTAMYL-TRNA REDUCTASE"/>
    <property type="match status" value="1"/>
</dbReference>
<dbReference type="Pfam" id="PF00745">
    <property type="entry name" value="GlutR_dimer"/>
    <property type="match status" value="1"/>
</dbReference>
<dbReference type="Pfam" id="PF05201">
    <property type="entry name" value="GlutR_N"/>
    <property type="match status" value="1"/>
</dbReference>
<dbReference type="Pfam" id="PF01488">
    <property type="entry name" value="Shikimate_DH"/>
    <property type="match status" value="1"/>
</dbReference>
<dbReference type="PIRSF" id="PIRSF000445">
    <property type="entry name" value="4pyrrol_synth_GluRdtase"/>
    <property type="match status" value="1"/>
</dbReference>
<dbReference type="SUPFAM" id="SSF69742">
    <property type="entry name" value="Glutamyl tRNA-reductase catalytic, N-terminal domain"/>
    <property type="match status" value="1"/>
</dbReference>
<dbReference type="SUPFAM" id="SSF69075">
    <property type="entry name" value="Glutamyl tRNA-reductase dimerization domain"/>
    <property type="match status" value="1"/>
</dbReference>
<dbReference type="SUPFAM" id="SSF51735">
    <property type="entry name" value="NAD(P)-binding Rossmann-fold domains"/>
    <property type="match status" value="1"/>
</dbReference>
<dbReference type="PROSITE" id="PS00747">
    <property type="entry name" value="GLUTR"/>
    <property type="match status" value="1"/>
</dbReference>